<protein>
    <recommendedName>
        <fullName>DNA polymerase alpha catalytic subunit</fullName>
        <ecNumber evidence="12 14">2.7.7.7</ecNumber>
    </recommendedName>
    <alternativeName>
        <fullName>DNA polymerase alpha catalytic subunit p180</fullName>
    </alternativeName>
</protein>
<dbReference type="EC" id="2.7.7.7" evidence="12 14"/>
<dbReference type="EMBL" id="X06745">
    <property type="protein sequence ID" value="CAA29920.1"/>
    <property type="molecule type" value="mRNA"/>
</dbReference>
<dbReference type="EMBL" id="AY275833">
    <property type="protein sequence ID" value="AAP13534.1"/>
    <property type="molecule type" value="Genomic_DNA"/>
</dbReference>
<dbReference type="EMBL" id="M64481">
    <property type="protein sequence ID" value="AAA52318.1"/>
    <property type="molecule type" value="Genomic_DNA"/>
</dbReference>
<dbReference type="CCDS" id="CCDS14214.1"/>
<dbReference type="PIR" id="S00257">
    <property type="entry name" value="DJHUAC"/>
</dbReference>
<dbReference type="RefSeq" id="NP_058633.2">
    <property type="nucleotide sequence ID" value="NM_016937.4"/>
</dbReference>
<dbReference type="PDB" id="1K0P">
    <property type="method" value="NMR"/>
    <property type="chains" value="A=1347-1377"/>
</dbReference>
<dbReference type="PDB" id="1K18">
    <property type="method" value="NMR"/>
    <property type="chains" value="A=1347-1377"/>
</dbReference>
<dbReference type="PDB" id="1N5G">
    <property type="method" value="NMR"/>
    <property type="chains" value="A=1345-1382"/>
</dbReference>
<dbReference type="PDB" id="4Q5V">
    <property type="method" value="X-ray"/>
    <property type="resolution" value="2.52 A"/>
    <property type="chains" value="A/E=336-1257"/>
</dbReference>
<dbReference type="PDB" id="4QCL">
    <property type="method" value="X-ray"/>
    <property type="resolution" value="2.20 A"/>
    <property type="chains" value="A=336-1257"/>
</dbReference>
<dbReference type="PDB" id="4Y97">
    <property type="method" value="X-ray"/>
    <property type="resolution" value="2.51 A"/>
    <property type="chains" value="B/D/F/H=1265-1444"/>
</dbReference>
<dbReference type="PDB" id="5EXR">
    <property type="method" value="X-ray"/>
    <property type="resolution" value="3.60 A"/>
    <property type="chains" value="C/G=335-1462"/>
</dbReference>
<dbReference type="PDB" id="5IUD">
    <property type="method" value="X-ray"/>
    <property type="resolution" value="3.30 A"/>
    <property type="chains" value="A/D/G/J=338-1255"/>
</dbReference>
<dbReference type="PDB" id="6AS7">
    <property type="method" value="X-ray"/>
    <property type="resolution" value="2.95 A"/>
    <property type="chains" value="A=336-1257"/>
</dbReference>
<dbReference type="PDB" id="7N2M">
    <property type="method" value="X-ray"/>
    <property type="resolution" value="2.90 A"/>
    <property type="chains" value="A=336-1257"/>
</dbReference>
<dbReference type="PDB" id="7OPL">
    <property type="method" value="EM"/>
    <property type="resolution" value="4.12 A"/>
    <property type="chains" value="A=334-1462"/>
</dbReference>
<dbReference type="PDB" id="7U5C">
    <property type="method" value="EM"/>
    <property type="resolution" value="4.60 A"/>
    <property type="chains" value="C=335-1462"/>
</dbReference>
<dbReference type="PDB" id="8B9D">
    <property type="method" value="EM"/>
    <property type="resolution" value="3.40 A"/>
    <property type="chains" value="B=1-1462"/>
</dbReference>
<dbReference type="PDB" id="8D0B">
    <property type="method" value="EM"/>
    <property type="resolution" value="3.43 A"/>
    <property type="chains" value="F=324-1462"/>
</dbReference>
<dbReference type="PDB" id="8D0K">
    <property type="method" value="EM"/>
    <property type="resolution" value="4.27 A"/>
    <property type="chains" value="F=2-1462"/>
</dbReference>
<dbReference type="PDB" id="8D96">
    <property type="method" value="EM"/>
    <property type="resolution" value="3.35 A"/>
    <property type="chains" value="C=1-1462"/>
</dbReference>
<dbReference type="PDB" id="8D9D">
    <property type="method" value="EM"/>
    <property type="resolution" value="3.59 A"/>
    <property type="chains" value="C=1-1462"/>
</dbReference>
<dbReference type="PDB" id="8QJ7">
    <property type="method" value="EM"/>
    <property type="resolution" value="3.07 A"/>
    <property type="chains" value="A=1-1462"/>
</dbReference>
<dbReference type="PDB" id="8VY3">
    <property type="method" value="EM"/>
    <property type="resolution" value="2.98 A"/>
    <property type="chains" value="C=338-1456"/>
</dbReference>
<dbReference type="PDB" id="9C8V">
    <property type="method" value="EM"/>
    <property type="resolution" value="3.39 A"/>
    <property type="chains" value="C=338-1456"/>
</dbReference>
<dbReference type="PDB" id="9MJ5">
    <property type="method" value="EM"/>
    <property type="resolution" value="3.50 A"/>
    <property type="chains" value="S=335-1244"/>
</dbReference>
<dbReference type="PDBsum" id="1K0P"/>
<dbReference type="PDBsum" id="1K18"/>
<dbReference type="PDBsum" id="1N5G"/>
<dbReference type="PDBsum" id="4Q5V"/>
<dbReference type="PDBsum" id="4QCL"/>
<dbReference type="PDBsum" id="4Y97"/>
<dbReference type="PDBsum" id="5EXR"/>
<dbReference type="PDBsum" id="5IUD"/>
<dbReference type="PDBsum" id="6AS7"/>
<dbReference type="PDBsum" id="7N2M"/>
<dbReference type="PDBsum" id="7OPL"/>
<dbReference type="PDBsum" id="7U5C"/>
<dbReference type="PDBsum" id="8B9D"/>
<dbReference type="PDBsum" id="8D0B"/>
<dbReference type="PDBsum" id="8D0K"/>
<dbReference type="PDBsum" id="8D96"/>
<dbReference type="PDBsum" id="8D9D"/>
<dbReference type="PDBsum" id="8QJ7"/>
<dbReference type="PDBsum" id="8VY3"/>
<dbReference type="PDBsum" id="9C8V"/>
<dbReference type="PDBsum" id="9MJ5"/>
<dbReference type="EMDB" id="EMD-13020"/>
<dbReference type="EMDB" id="EMD-26346"/>
<dbReference type="EMDB" id="EMD-26347"/>
<dbReference type="EMDB" id="EMD-27104"/>
<dbReference type="EMDB" id="EMD-27107"/>
<dbReference type="EMDB" id="EMD-27256"/>
<dbReference type="EMDB" id="EMD-27258"/>
<dbReference type="EMDB" id="EMD-42033"/>
<dbReference type="EMDB" id="EMD-42034"/>
<dbReference type="EMDB" id="EMD-42035"/>
<dbReference type="EMDB" id="EMD-42036"/>
<dbReference type="EMDB" id="EMD-42037"/>
<dbReference type="EMDB" id="EMD-48312"/>
<dbReference type="SASBDB" id="P09884"/>
<dbReference type="SMR" id="P09884"/>
<dbReference type="BioGRID" id="111418">
    <property type="interactions" value="128"/>
</dbReference>
<dbReference type="ComplexPortal" id="CPX-2087">
    <property type="entry name" value="DNA polymerase alpha:primase complex"/>
</dbReference>
<dbReference type="CORUM" id="P09884"/>
<dbReference type="FunCoup" id="P09884">
    <property type="interactions" value="3593"/>
</dbReference>
<dbReference type="IntAct" id="P09884">
    <property type="interactions" value="49"/>
</dbReference>
<dbReference type="MINT" id="P09884"/>
<dbReference type="STRING" id="9606.ENSP00000368358"/>
<dbReference type="BindingDB" id="P09884"/>
<dbReference type="ChEMBL" id="CHEMBL1828"/>
<dbReference type="DrugBank" id="DB00242">
    <property type="generic name" value="Cladribine"/>
</dbReference>
<dbReference type="DrugBank" id="DB00631">
    <property type="generic name" value="Clofarabine"/>
</dbReference>
<dbReference type="DrugBank" id="DB01073">
    <property type="generic name" value="Fludarabine"/>
</dbReference>
<dbReference type="DrugBank" id="DB01280">
    <property type="generic name" value="Nelarabine"/>
</dbReference>
<dbReference type="DrugCentral" id="P09884"/>
<dbReference type="CarbonylDB" id="P09884"/>
<dbReference type="GlyGen" id="P09884">
    <property type="glycosylation" value="5 sites, 4 N-linked glycans (3 sites), 1 O-linked glycan (1 site)"/>
</dbReference>
<dbReference type="iPTMnet" id="P09884"/>
<dbReference type="PhosphoSitePlus" id="P09884"/>
<dbReference type="BioMuta" id="POLA1"/>
<dbReference type="DMDM" id="60392197"/>
<dbReference type="jPOST" id="P09884"/>
<dbReference type="MassIVE" id="P09884"/>
<dbReference type="PaxDb" id="9606-ENSP00000368349"/>
<dbReference type="PeptideAtlas" id="P09884"/>
<dbReference type="ProteomicsDB" id="52272"/>
<dbReference type="Pumba" id="P09884"/>
<dbReference type="Antibodypedia" id="498">
    <property type="antibodies" value="189 antibodies from 28 providers"/>
</dbReference>
<dbReference type="DNASU" id="5422"/>
<dbReference type="Ensembl" id="ENST00000379059.7">
    <property type="protein sequence ID" value="ENSP00000368349.3"/>
    <property type="gene ID" value="ENSG00000101868.13"/>
</dbReference>
<dbReference type="GeneID" id="5422"/>
<dbReference type="KEGG" id="hsa:5422"/>
<dbReference type="UCSC" id="uc004dbl.4">
    <property type="organism name" value="human"/>
</dbReference>
<dbReference type="AGR" id="HGNC:9173"/>
<dbReference type="CTD" id="5422"/>
<dbReference type="DisGeNET" id="5422"/>
<dbReference type="GeneCards" id="POLA1"/>
<dbReference type="HGNC" id="HGNC:9173">
    <property type="gene designation" value="POLA1"/>
</dbReference>
<dbReference type="HPA" id="ENSG00000101868">
    <property type="expression patterns" value="Low tissue specificity"/>
</dbReference>
<dbReference type="MalaCards" id="POLA1"/>
<dbReference type="MIM" id="301030">
    <property type="type" value="phenotype"/>
</dbReference>
<dbReference type="MIM" id="301220">
    <property type="type" value="phenotype"/>
</dbReference>
<dbReference type="MIM" id="312040">
    <property type="type" value="gene"/>
</dbReference>
<dbReference type="neXtProt" id="NX_P09884"/>
<dbReference type="OpenTargets" id="ENSG00000101868"/>
<dbReference type="Orphanet" id="163976">
    <property type="disease" value="X-linked intellectual disability, Van Esch type"/>
</dbReference>
<dbReference type="Orphanet" id="85453">
    <property type="disease" value="X-linked reticulate pigmentary disorder"/>
</dbReference>
<dbReference type="PharmGKB" id="PA162399856"/>
<dbReference type="VEuPathDB" id="HostDB:ENSG00000101868"/>
<dbReference type="eggNOG" id="KOG0970">
    <property type="taxonomic scope" value="Eukaryota"/>
</dbReference>
<dbReference type="GeneTree" id="ENSGT00550000074891"/>
<dbReference type="HOGENOM" id="CLU_001718_0_0_1"/>
<dbReference type="InParanoid" id="P09884"/>
<dbReference type="OrthoDB" id="6755010at2759"/>
<dbReference type="PAN-GO" id="P09884">
    <property type="GO annotations" value="10 GO annotations based on evolutionary models"/>
</dbReference>
<dbReference type="PhylomeDB" id="P09884"/>
<dbReference type="TreeFam" id="TF103001"/>
<dbReference type="BRENDA" id="2.7.7.102">
    <property type="organism ID" value="2681"/>
</dbReference>
<dbReference type="PathwayCommons" id="P09884"/>
<dbReference type="Reactome" id="R-HSA-113501">
    <property type="pathway name" value="Inhibition of replication initiation of damaged DNA by RB1/E2F1"/>
</dbReference>
<dbReference type="Reactome" id="R-HSA-174411">
    <property type="pathway name" value="Polymerase switching on the C-strand of the telomere"/>
</dbReference>
<dbReference type="Reactome" id="R-HSA-174430">
    <property type="pathway name" value="Telomere C-strand synthesis initiation"/>
</dbReference>
<dbReference type="Reactome" id="R-HSA-68952">
    <property type="pathway name" value="DNA replication initiation"/>
</dbReference>
<dbReference type="Reactome" id="R-HSA-68962">
    <property type="pathway name" value="Activation of the pre-replicative complex"/>
</dbReference>
<dbReference type="Reactome" id="R-HSA-69091">
    <property type="pathway name" value="Polymerase switching"/>
</dbReference>
<dbReference type="Reactome" id="R-HSA-69166">
    <property type="pathway name" value="Removal of the Flap Intermediate"/>
</dbReference>
<dbReference type="Reactome" id="R-HSA-69183">
    <property type="pathway name" value="Processive synthesis on the lagging strand"/>
</dbReference>
<dbReference type="Reactome" id="R-HSA-69205">
    <property type="pathway name" value="G1/S-Specific Transcription"/>
</dbReference>
<dbReference type="Reactome" id="R-HSA-9710421">
    <property type="pathway name" value="Defective pyroptosis"/>
</dbReference>
<dbReference type="SignaLink" id="P09884"/>
<dbReference type="SIGNOR" id="P09884"/>
<dbReference type="BioGRID-ORCS" id="5422">
    <property type="hits" value="352 hits in 806 CRISPR screens"/>
</dbReference>
<dbReference type="ChiTaRS" id="POLA1">
    <property type="organism name" value="human"/>
</dbReference>
<dbReference type="EvolutionaryTrace" id="P09884"/>
<dbReference type="GeneWiki" id="Polymerase_(DNA_directed),_alpha_1"/>
<dbReference type="GenomeRNAi" id="5422"/>
<dbReference type="Pharos" id="P09884">
    <property type="development level" value="Tclin"/>
</dbReference>
<dbReference type="PRO" id="PR:P09884"/>
<dbReference type="Proteomes" id="UP000005640">
    <property type="component" value="Chromosome X"/>
</dbReference>
<dbReference type="RNAct" id="P09884">
    <property type="molecule type" value="protein"/>
</dbReference>
<dbReference type="Bgee" id="ENSG00000101868">
    <property type="expression patterns" value="Expressed in ventricular zone and 158 other cell types or tissues"/>
</dbReference>
<dbReference type="ExpressionAtlas" id="P09884">
    <property type="expression patterns" value="baseline and differential"/>
</dbReference>
<dbReference type="GO" id="GO:0005658">
    <property type="term" value="C:alpha DNA polymerase:primase complex"/>
    <property type="evidence" value="ECO:0000314"/>
    <property type="project" value="UniProtKB"/>
</dbReference>
<dbReference type="GO" id="GO:0000785">
    <property type="term" value="C:chromatin"/>
    <property type="evidence" value="ECO:0000314"/>
    <property type="project" value="UniProtKB"/>
</dbReference>
<dbReference type="GO" id="GO:0005829">
    <property type="term" value="C:cytosol"/>
    <property type="evidence" value="ECO:0000314"/>
    <property type="project" value="UniProtKB"/>
</dbReference>
<dbReference type="GO" id="GO:0005635">
    <property type="term" value="C:nuclear envelope"/>
    <property type="evidence" value="ECO:0000314"/>
    <property type="project" value="UniProtKB"/>
</dbReference>
<dbReference type="GO" id="GO:0016363">
    <property type="term" value="C:nuclear matrix"/>
    <property type="evidence" value="ECO:0000314"/>
    <property type="project" value="UniProtKB"/>
</dbReference>
<dbReference type="GO" id="GO:0005730">
    <property type="term" value="C:nucleolus"/>
    <property type="evidence" value="ECO:0000314"/>
    <property type="project" value="UniProtKB"/>
</dbReference>
<dbReference type="GO" id="GO:0005654">
    <property type="term" value="C:nucleoplasm"/>
    <property type="evidence" value="ECO:0000314"/>
    <property type="project" value="UniProtKB"/>
</dbReference>
<dbReference type="GO" id="GO:0005634">
    <property type="term" value="C:nucleus"/>
    <property type="evidence" value="ECO:0000314"/>
    <property type="project" value="UniProtKB"/>
</dbReference>
<dbReference type="GO" id="GO:0003682">
    <property type="term" value="F:chromatin binding"/>
    <property type="evidence" value="ECO:0000314"/>
    <property type="project" value="UniProtKB"/>
</dbReference>
<dbReference type="GO" id="GO:0003677">
    <property type="term" value="F:DNA binding"/>
    <property type="evidence" value="ECO:0000314"/>
    <property type="project" value="UniProtKB"/>
</dbReference>
<dbReference type="GO" id="GO:0003688">
    <property type="term" value="F:DNA replication origin binding"/>
    <property type="evidence" value="ECO:0000318"/>
    <property type="project" value="GO_Central"/>
</dbReference>
<dbReference type="GO" id="GO:0003887">
    <property type="term" value="F:DNA-directed DNA polymerase activity"/>
    <property type="evidence" value="ECO:0000314"/>
    <property type="project" value="UniProtKB"/>
</dbReference>
<dbReference type="GO" id="GO:0000166">
    <property type="term" value="F:nucleotide binding"/>
    <property type="evidence" value="ECO:0000314"/>
    <property type="project" value="UniProtKB"/>
</dbReference>
<dbReference type="GO" id="GO:0019901">
    <property type="term" value="F:protein kinase binding"/>
    <property type="evidence" value="ECO:0000353"/>
    <property type="project" value="UniProtKB"/>
</dbReference>
<dbReference type="GO" id="GO:0003697">
    <property type="term" value="F:single-stranded DNA binding"/>
    <property type="evidence" value="ECO:0000318"/>
    <property type="project" value="GO_Central"/>
</dbReference>
<dbReference type="GO" id="GO:0008270">
    <property type="term" value="F:zinc ion binding"/>
    <property type="evidence" value="ECO:0000314"/>
    <property type="project" value="UniProtKB"/>
</dbReference>
<dbReference type="GO" id="GO:0006281">
    <property type="term" value="P:DNA repair"/>
    <property type="evidence" value="ECO:0000315"/>
    <property type="project" value="UniProtKB"/>
</dbReference>
<dbReference type="GO" id="GO:0006260">
    <property type="term" value="P:DNA replication"/>
    <property type="evidence" value="ECO:0000315"/>
    <property type="project" value="UniProtKB"/>
</dbReference>
<dbReference type="GO" id="GO:0006270">
    <property type="term" value="P:DNA replication initiation"/>
    <property type="evidence" value="ECO:0000314"/>
    <property type="project" value="UniProtKB"/>
</dbReference>
<dbReference type="GO" id="GO:0006269">
    <property type="term" value="P:DNA replication, synthesis of primer"/>
    <property type="evidence" value="ECO:0000314"/>
    <property type="project" value="UniProtKB"/>
</dbReference>
<dbReference type="GO" id="GO:0006271">
    <property type="term" value="P:DNA strand elongation involved in DNA replication"/>
    <property type="evidence" value="ECO:0000315"/>
    <property type="project" value="UniProtKB"/>
</dbReference>
<dbReference type="GO" id="GO:0000731">
    <property type="term" value="P:DNA synthesis involved in DNA repair"/>
    <property type="evidence" value="ECO:0000315"/>
    <property type="project" value="UniProtKB"/>
</dbReference>
<dbReference type="GO" id="GO:0006303">
    <property type="term" value="P:double-strand break repair via nonhomologous end joining"/>
    <property type="evidence" value="ECO:0000315"/>
    <property type="project" value="UniProtKB"/>
</dbReference>
<dbReference type="GO" id="GO:0006273">
    <property type="term" value="P:lagging strand elongation"/>
    <property type="evidence" value="ECO:0000314"/>
    <property type="project" value="UniProtKB"/>
</dbReference>
<dbReference type="GO" id="GO:0006272">
    <property type="term" value="P:leading strand elongation"/>
    <property type="evidence" value="ECO:0000314"/>
    <property type="project" value="UniProtKB"/>
</dbReference>
<dbReference type="GO" id="GO:1902975">
    <property type="term" value="P:mitotic DNA replication initiation"/>
    <property type="evidence" value="ECO:0000318"/>
    <property type="project" value="GO_Central"/>
</dbReference>
<dbReference type="GO" id="GO:0032479">
    <property type="term" value="P:regulation of type I interferon production"/>
    <property type="evidence" value="ECO:0000315"/>
    <property type="project" value="UniProtKB"/>
</dbReference>
<dbReference type="CDD" id="cd05776">
    <property type="entry name" value="DNA_polB_alpha_exo"/>
    <property type="match status" value="1"/>
</dbReference>
<dbReference type="CDD" id="cd05532">
    <property type="entry name" value="POLBc_alpha"/>
    <property type="match status" value="1"/>
</dbReference>
<dbReference type="FunFam" id="1.10.132.60:FF:000006">
    <property type="entry name" value="DNA polymerase"/>
    <property type="match status" value="1"/>
</dbReference>
<dbReference type="FunFam" id="1.10.287.690:FF:000003">
    <property type="entry name" value="DNA polymerase"/>
    <property type="match status" value="1"/>
</dbReference>
<dbReference type="FunFam" id="1.10.3200.20:FF:000001">
    <property type="entry name" value="DNA polymerase"/>
    <property type="match status" value="1"/>
</dbReference>
<dbReference type="FunFam" id="2.40.50.730:FF:000001">
    <property type="entry name" value="DNA polymerase"/>
    <property type="match status" value="1"/>
</dbReference>
<dbReference type="FunFam" id="3.30.420.10:FF:000018">
    <property type="entry name" value="DNA polymerase"/>
    <property type="match status" value="1"/>
</dbReference>
<dbReference type="FunFam" id="3.30.70.2820:FF:000001">
    <property type="entry name" value="DNA polymerase"/>
    <property type="match status" value="1"/>
</dbReference>
<dbReference type="FunFam" id="3.90.1600.10:FF:000022">
    <property type="entry name" value="DNA polymerase"/>
    <property type="match status" value="1"/>
</dbReference>
<dbReference type="FunFam" id="3.90.1600.10:FF:000023">
    <property type="entry name" value="DNA polymerase"/>
    <property type="match status" value="1"/>
</dbReference>
<dbReference type="Gene3D" id="2.40.50.730">
    <property type="match status" value="1"/>
</dbReference>
<dbReference type="Gene3D" id="3.30.70.2820">
    <property type="match status" value="1"/>
</dbReference>
<dbReference type="Gene3D" id="1.10.3200.20">
    <property type="entry name" value="DNA Polymerase alpha, zinc finger"/>
    <property type="match status" value="1"/>
</dbReference>
<dbReference type="Gene3D" id="1.10.132.60">
    <property type="entry name" value="DNA polymerase family B, C-terminal domain"/>
    <property type="match status" value="1"/>
</dbReference>
<dbReference type="Gene3D" id="1.10.287.690">
    <property type="entry name" value="Helix hairpin bin"/>
    <property type="match status" value="1"/>
</dbReference>
<dbReference type="Gene3D" id="3.90.1600.10">
    <property type="entry name" value="Palm domain of DNA polymerase"/>
    <property type="match status" value="1"/>
</dbReference>
<dbReference type="Gene3D" id="3.30.420.10">
    <property type="entry name" value="Ribonuclease H-like superfamily/Ribonuclease H"/>
    <property type="match status" value="1"/>
</dbReference>
<dbReference type="InterPro" id="IPR006172">
    <property type="entry name" value="DNA-dir_DNA_pol_B"/>
</dbReference>
<dbReference type="InterPro" id="IPR017964">
    <property type="entry name" value="DNA-dir_DNA_pol_B_CS"/>
</dbReference>
<dbReference type="InterPro" id="IPR006133">
    <property type="entry name" value="DNA-dir_DNA_pol_B_exonuc"/>
</dbReference>
<dbReference type="InterPro" id="IPR006134">
    <property type="entry name" value="DNA-dir_DNA_pol_B_multi_dom"/>
</dbReference>
<dbReference type="InterPro" id="IPR043502">
    <property type="entry name" value="DNA/RNA_pol_sf"/>
</dbReference>
<dbReference type="InterPro" id="IPR024647">
    <property type="entry name" value="DNA_pol_a_cat_su_N"/>
</dbReference>
<dbReference type="InterPro" id="IPR042087">
    <property type="entry name" value="DNA_pol_B_thumb"/>
</dbReference>
<dbReference type="InterPro" id="IPR023211">
    <property type="entry name" value="DNA_pol_palm_dom_sf"/>
</dbReference>
<dbReference type="InterPro" id="IPR038256">
    <property type="entry name" value="Pol_alpha_znc_sf"/>
</dbReference>
<dbReference type="InterPro" id="IPR045846">
    <property type="entry name" value="POLBc_alpha"/>
</dbReference>
<dbReference type="InterPro" id="IPR012337">
    <property type="entry name" value="RNaseH-like_sf"/>
</dbReference>
<dbReference type="InterPro" id="IPR036397">
    <property type="entry name" value="RNaseH_sf"/>
</dbReference>
<dbReference type="InterPro" id="IPR015088">
    <property type="entry name" value="Znf_DNA-dir_DNA_pol_B_alpha"/>
</dbReference>
<dbReference type="NCBIfam" id="TIGR00592">
    <property type="entry name" value="pol2"/>
    <property type="match status" value="1"/>
</dbReference>
<dbReference type="PANTHER" id="PTHR45861">
    <property type="entry name" value="DNA POLYMERASE ALPHA CATALYTIC SUBUNIT"/>
    <property type="match status" value="1"/>
</dbReference>
<dbReference type="PANTHER" id="PTHR45861:SF1">
    <property type="entry name" value="DNA POLYMERASE ALPHA CATALYTIC SUBUNIT"/>
    <property type="match status" value="1"/>
</dbReference>
<dbReference type="Pfam" id="PF12254">
    <property type="entry name" value="DNA_pol_alpha_N"/>
    <property type="match status" value="1"/>
</dbReference>
<dbReference type="Pfam" id="PF00136">
    <property type="entry name" value="DNA_pol_B"/>
    <property type="match status" value="1"/>
</dbReference>
<dbReference type="Pfam" id="PF03104">
    <property type="entry name" value="DNA_pol_B_exo1"/>
    <property type="match status" value="1"/>
</dbReference>
<dbReference type="Pfam" id="PF08996">
    <property type="entry name" value="zf-DNA_Pol"/>
    <property type="match status" value="1"/>
</dbReference>
<dbReference type="PRINTS" id="PR00106">
    <property type="entry name" value="DNAPOLB"/>
</dbReference>
<dbReference type="SMART" id="SM00486">
    <property type="entry name" value="POLBc"/>
    <property type="match status" value="1"/>
</dbReference>
<dbReference type="SUPFAM" id="SSF56672">
    <property type="entry name" value="DNA/RNA polymerases"/>
    <property type="match status" value="1"/>
</dbReference>
<dbReference type="SUPFAM" id="SSF53098">
    <property type="entry name" value="Ribonuclease H-like"/>
    <property type="match status" value="1"/>
</dbReference>
<dbReference type="SUPFAM" id="SSF90234">
    <property type="entry name" value="Zinc finger domain of DNA polymerase-alpha"/>
    <property type="match status" value="1"/>
</dbReference>
<dbReference type="PROSITE" id="PS00116">
    <property type="entry name" value="DNA_POLYMERASE_B"/>
    <property type="match status" value="1"/>
</dbReference>
<comment type="function">
    <text evidence="7 8 10 14">Catalytic subunit of the DNA polymerase alpha complex (also known as the alpha DNA polymerase-primase complex) which plays an essential role in the initiation of DNA synthesis. During the S phase of the cell cycle, the DNA polymerase alpha complex (composed of a catalytic subunit POLA1, a regulatory subunit POLA2 and two primase subunits PRIM1 and PRIM2) is recruited to DNA at the replicative forks via direct interactions with MCM10 and WDHD1. The primase subunit of the polymerase alpha complex initiates DNA synthesis by oligomerising short RNA primers on both leading and lagging strands. These primers are initially extended by the polymerase alpha catalytic subunit and subsequently transferred to polymerase delta and polymerase epsilon for processive synthesis on the lagging and leading strand, respectively. The reason this transfer occurs is because the polymerase alpha has limited processivity and lacks intrinsic 3' exonuclease activity for proofreading error, and therefore is not well suited for replicating long complexes. In the cytosol, responsible for a substantial proportion of the physiological concentration of cytosolic RNA:DNA hybrids, which are necessary to prevent spontaneous activation of type I interferon responses (PubMed:27019227).</text>
</comment>
<comment type="catalytic activity">
    <reaction evidence="7 12 14">
        <text>DNA(n) + a 2'-deoxyribonucleoside 5'-triphosphate = DNA(n+1) + diphosphate</text>
        <dbReference type="Rhea" id="RHEA:22508"/>
        <dbReference type="Rhea" id="RHEA-COMP:17339"/>
        <dbReference type="Rhea" id="RHEA-COMP:17340"/>
        <dbReference type="ChEBI" id="CHEBI:33019"/>
        <dbReference type="ChEBI" id="CHEBI:61560"/>
        <dbReference type="ChEBI" id="CHEBI:173112"/>
        <dbReference type="EC" id="2.7.7.7"/>
    </reaction>
    <physiologicalReaction direction="left-to-right" evidence="7 14">
        <dbReference type="Rhea" id="RHEA:22509"/>
    </physiologicalReaction>
</comment>
<comment type="activity regulation">
    <text evidence="7">Autoinhibited in apo-primosome, where the zinc motif of POLA1 and oligonucleotide/olicosaccharide-binding domain of POLA2 are placed into the active site blocking RNA:DNA duplex entry.</text>
</comment>
<comment type="subunit">
    <text evidence="5 13 14 15">Component of the alpha DNA polymerase complex (also known as the alpha DNA polymerase-primase complex) consisting of four subunits: the catalytic subunit POLA1, the regulatory subunit POLA2, and the primase complex subunits PRIM1 and PRIM2 respectively (PubMed:26975377, PubMed:9705292). Interacts with PARP1; this interaction functions as part of the control of replication fork progression (PubMed:9518481). Interacts with MCM10 and WDHD1; these interactions recruit the polymerase alpha complex to the pre-replicative complex bound to DNA (PubMed:19608746). Interacts with RPA1; this interaction stabilizes the replicative complex and reduces the misincorporation rate of DNA polymerase alpha by acting as a fidelity clamp (PubMed:9214288).</text>
</comment>
<comment type="subunit">
    <text evidence="9">(Microbial infection) Interacts with SV40 Large T antigen; this interaction allows viral DNA replication.</text>
</comment>
<comment type="subunit">
    <text evidence="11">(Microbial infection) Interacts with herpes simplex virus 1/HHV-1 replication origin-binding protein UL9.</text>
</comment>
<comment type="interaction">
    <interactant intactId="EBI-850026">
        <id>P09884</id>
    </interactant>
    <interactant intactId="EBI-621389">
        <id>P27694</id>
        <label>RPA1</label>
    </interactant>
    <organismsDiffer>false</organismsDiffer>
    <experiments>2</experiments>
</comment>
<comment type="interaction">
    <interactant intactId="EBI-850026">
        <id>P09884</id>
    </interactant>
    <interactant intactId="EBI-8596799">
        <id>P10193</id>
        <label>UL9</label>
    </interactant>
    <organismsDiffer>true</organismsDiffer>
    <experiments>4</experiments>
</comment>
<comment type="interaction">
    <interactant intactId="EBI-850026">
        <id>P09884</id>
    </interactant>
    <interactant intactId="EBI-617698">
        <id>P03070</id>
    </interactant>
    <organismsDiffer>true</organismsDiffer>
    <experiments>6</experiments>
</comment>
<comment type="subcellular location">
    <subcellularLocation>
        <location evidence="8">Nucleus</location>
    </subcellularLocation>
    <subcellularLocation>
        <location evidence="8">Cytoplasm</location>
        <location evidence="8">Cytosol</location>
    </subcellularLocation>
    <text evidence="8">In the cytosol, colocalizes with RNA:DNA hybrids with a speckled pattern.</text>
</comment>
<comment type="domain">
    <text evidence="1">The CysA-type zinc finger is required for PCNA-binding.</text>
</comment>
<comment type="PTM">
    <text evidence="6">A 165 kDa form is probably produced by proteolytic cleavage at Lys-124.</text>
</comment>
<comment type="disease" evidence="8">
    <disease id="DI-04788">
        <name>Pigmentary disorder, reticulate, with systemic manifestations, X-linked</name>
        <acronym>PDR</acronym>
        <description>An X-linked recessive disorder characterized by recurrent infections and sterile inflammation in various organs. Diffuse skin hyperpigmentation with a distinctive reticulate pattern is universally evident by early childhood. This is later followed in many patients by hypohidrosis, corneal inflammation and scarring, enterocolitis that resembles inflammatory bowel disease, and recurrent urethral strictures. Melanin and amyloid deposition is present in the dermis. Affected males also have a characteristic facies with frontally upswept hair and flared eyebrows. Female carriers have only restricted pigmentary changes along Blaschko's lines.</description>
        <dbReference type="MIM" id="301220"/>
    </disease>
    <text evidence="8">The disease is caused by variants affecting the gene represented in this entry. XLPDR is caused by a recurrent intronic mutation that results in missplicing and reduced POLA1 expression. This leads to a decrease in cytosolic RNA:DNA hybrids and constitutive activation of type I interferon responses, but has no effect on cell replication.</text>
</comment>
<comment type="disease" evidence="10">
    <disease id="DI-05626">
        <name>Van Esch-O'Driscoll syndrome</name>
        <acronym>VEODS</acronym>
        <description>An X-linked recessive syndrome characterized by different degrees of intellectual disability, moderate to severe short stature, microcephaly, hypogonadism, and variable congenital malformations.</description>
        <dbReference type="MIM" id="301030"/>
    </disease>
    <text>The disease is caused by variants affecting the gene represented in this entry.</text>
</comment>
<comment type="miscellaneous">
    <text>In eukaryotes there are five DNA polymerases: alpha, beta, gamma, delta, and epsilon which are responsible for different reactions of DNA synthesis.</text>
</comment>
<comment type="similarity">
    <text evidence="16">Belongs to the DNA polymerase type-B family.</text>
</comment>
<feature type="chain" id="PRO_0000046428" description="DNA polymerase alpha catalytic subunit">
    <location>
        <begin position="1"/>
        <end position="1462"/>
    </location>
</feature>
<feature type="zinc finger region" description="CysA-type" evidence="1">
    <location>
        <begin position="1283"/>
        <end position="1318"/>
    </location>
</feature>
<feature type="region of interest" description="Disordered" evidence="4">
    <location>
        <begin position="1"/>
        <end position="33"/>
    </location>
</feature>
<feature type="region of interest" description="Disordered" evidence="4">
    <location>
        <begin position="98"/>
        <end position="123"/>
    </location>
</feature>
<feature type="region of interest" description="Disordered" evidence="4">
    <location>
        <begin position="232"/>
        <end position="251"/>
    </location>
</feature>
<feature type="region of interest" description="DNA-binding" evidence="3">
    <location>
        <begin position="650"/>
        <end position="715"/>
    </location>
</feature>
<feature type="region of interest" description="DNA-binding" evidence="3">
    <location>
        <begin position="1245"/>
        <end position="1376"/>
    </location>
</feature>
<feature type="short sequence motif" description="CysB motif" evidence="1">
    <location>
        <begin position="1348"/>
        <end position="1374"/>
    </location>
</feature>
<feature type="compositionally biased region" description="Basic residues" evidence="4">
    <location>
        <begin position="20"/>
        <end position="29"/>
    </location>
</feature>
<feature type="compositionally biased region" description="Basic and acidic residues" evidence="4">
    <location>
        <begin position="106"/>
        <end position="116"/>
    </location>
</feature>
<feature type="binding site" evidence="7 17">
    <location>
        <position position="1283"/>
    </location>
    <ligand>
        <name>Zn(2+)</name>
        <dbReference type="ChEBI" id="CHEBI:29105"/>
        <label>1</label>
    </ligand>
</feature>
<feature type="binding site" evidence="7 17">
    <location>
        <position position="1286"/>
    </location>
    <ligand>
        <name>Zn(2+)</name>
        <dbReference type="ChEBI" id="CHEBI:29105"/>
        <label>1</label>
    </ligand>
</feature>
<feature type="binding site" evidence="7 17">
    <location>
        <position position="1310"/>
    </location>
    <ligand>
        <name>Zn(2+)</name>
        <dbReference type="ChEBI" id="CHEBI:29105"/>
        <label>1</label>
    </ligand>
</feature>
<feature type="binding site" evidence="7 17">
    <location>
        <position position="1315"/>
    </location>
    <ligand>
        <name>Zn(2+)</name>
        <dbReference type="ChEBI" id="CHEBI:29105"/>
        <label>1</label>
    </ligand>
</feature>
<feature type="binding site" evidence="7 17">
    <location>
        <position position="1348"/>
    </location>
    <ligand>
        <name>Zn(2+)</name>
        <dbReference type="ChEBI" id="CHEBI:29105"/>
        <label>2</label>
    </ligand>
</feature>
<feature type="binding site" evidence="7 17">
    <location>
        <position position="1353"/>
    </location>
    <ligand>
        <name>Zn(2+)</name>
        <dbReference type="ChEBI" id="CHEBI:29105"/>
        <label>2</label>
    </ligand>
</feature>
<feature type="binding site" evidence="7 17">
    <location>
        <position position="1371"/>
    </location>
    <ligand>
        <name>Zn(2+)</name>
        <dbReference type="ChEBI" id="CHEBI:29105"/>
        <label>2</label>
    </ligand>
</feature>
<feature type="binding site" evidence="7 17">
    <location>
        <position position="1374"/>
    </location>
    <ligand>
        <name>Zn(2+)</name>
        <dbReference type="ChEBI" id="CHEBI:29105"/>
        <label>2</label>
    </ligand>
</feature>
<feature type="site" description="Cleavage">
    <location>
        <begin position="124"/>
        <end position="125"/>
    </location>
</feature>
<feature type="modified residue" description="Phosphothreonine" evidence="19 20">
    <location>
        <position position="174"/>
    </location>
</feature>
<feature type="modified residue" description="Phosphoserine" evidence="18 19 20 21 22">
    <location>
        <position position="186"/>
    </location>
</feature>
<feature type="modified residue" description="Phosphoserine" evidence="18 20 22">
    <location>
        <position position="190"/>
    </location>
</feature>
<feature type="modified residue" description="Phosphoserine" evidence="18 20 21 22">
    <location>
        <position position="209"/>
    </location>
</feature>
<feature type="modified residue" description="N6-acetyllysine" evidence="2">
    <location>
        <position position="224"/>
    </location>
</feature>
<feature type="modified residue" description="Phosphothreonine" evidence="22">
    <location>
        <position position="406"/>
    </location>
</feature>
<feature type="modified residue" description="N6-succinyllysine" evidence="2">
    <location>
        <position position="970"/>
    </location>
</feature>
<feature type="sequence variant" id="VAR_083194" description="In VEODS; no effect on protein abundance; decreased DNA replication; dbSNP:rs1569271378." evidence="10">
    <original>I</original>
    <variation>S</variation>
    <location>
        <position position="79"/>
    </location>
</feature>
<feature type="sequence variant" id="VAR_083195" description="In VEODS; decreased protein abundance; may alter splicing; dbSNP:rs1569271892." evidence="10">
    <original>G</original>
    <variation>R</variation>
    <location>
        <position position="110"/>
    </location>
</feature>
<feature type="sequence variant" id="VAR_048877" description="In dbSNP:rs2230927.">
    <original>Y</original>
    <variation>H</variation>
    <location>
        <position position="740"/>
    </location>
</feature>
<feature type="sequence variant" id="VAR_083196" description="In VEODS; no effect on protein abundance; decreased DNA replication; dbSNP:rs1569350993." evidence="10">
    <original>P</original>
    <variation>L</variation>
    <location>
        <position position="1381"/>
    </location>
</feature>
<feature type="sequence conflict" description="In Ref. 1; CAA29920." evidence="16" ref="1">
    <original>SPQL</original>
    <variation>KSTA</variation>
    <location>
        <begin position="503"/>
        <end position="506"/>
    </location>
</feature>
<feature type="sequence conflict" description="In Ref. 1; CAA29920." evidence="16" ref="1">
    <original>A</original>
    <variation>G</variation>
    <location>
        <position position="837"/>
    </location>
</feature>
<feature type="sequence conflict" description="In Ref. 4; AA sequence." evidence="16" ref="4">
    <original>L</original>
    <variation>C</variation>
    <location>
        <position position="1405"/>
    </location>
</feature>
<feature type="sequence conflict" description="In Ref. 4; AA sequence." evidence="16" ref="4">
    <original>V</original>
    <variation>C</variation>
    <location>
        <position position="1426"/>
    </location>
</feature>
<feature type="strand" evidence="28">
    <location>
        <begin position="326"/>
        <end position="328"/>
    </location>
</feature>
<feature type="strand" evidence="25">
    <location>
        <begin position="340"/>
        <end position="350"/>
    </location>
</feature>
<feature type="turn" evidence="25">
    <location>
        <begin position="352"/>
        <end position="354"/>
    </location>
</feature>
<feature type="strand" evidence="25">
    <location>
        <begin position="359"/>
        <end position="367"/>
    </location>
</feature>
<feature type="helix" evidence="25">
    <location>
        <begin position="368"/>
        <end position="370"/>
    </location>
</feature>
<feature type="strand" evidence="25">
    <location>
        <begin position="372"/>
        <end position="380"/>
    </location>
</feature>
<feature type="strand" evidence="25">
    <location>
        <begin position="385"/>
        <end position="391"/>
    </location>
</feature>
<feature type="strand" evidence="25">
    <location>
        <begin position="393"/>
        <end position="396"/>
    </location>
</feature>
<feature type="turn" evidence="25">
    <location>
        <begin position="398"/>
        <end position="400"/>
    </location>
</feature>
<feature type="strand" evidence="25">
    <location>
        <begin position="403"/>
        <end position="407"/>
    </location>
</feature>
<feature type="helix" evidence="25">
    <location>
        <begin position="410"/>
        <end position="419"/>
    </location>
</feature>
<feature type="helix" evidence="25">
    <location>
        <begin position="421"/>
        <end position="425"/>
    </location>
</feature>
<feature type="strand" evidence="25">
    <location>
        <begin position="431"/>
        <end position="438"/>
    </location>
</feature>
<feature type="strand" evidence="30">
    <location>
        <begin position="441"/>
        <end position="445"/>
    </location>
</feature>
<feature type="strand" evidence="25">
    <location>
        <begin position="448"/>
        <end position="457"/>
    </location>
</feature>
<feature type="strand" evidence="25">
    <location>
        <begin position="471"/>
        <end position="477"/>
    </location>
</feature>
<feature type="helix" evidence="25">
    <location>
        <begin position="483"/>
        <end position="491"/>
    </location>
</feature>
<feature type="strand" evidence="25">
    <location>
        <begin position="495"/>
        <end position="503"/>
    </location>
</feature>
<feature type="strand" evidence="25">
    <location>
        <begin position="512"/>
        <end position="522"/>
    </location>
</feature>
<feature type="helix" evidence="25">
    <location>
        <begin position="523"/>
        <end position="525"/>
    </location>
</feature>
<feature type="strand" evidence="25">
    <location>
        <begin position="526"/>
        <end position="529"/>
    </location>
</feature>
<feature type="strand" evidence="25">
    <location>
        <begin position="537"/>
        <end position="548"/>
    </location>
</feature>
<feature type="strand" evidence="25">
    <location>
        <begin position="550"/>
        <end position="552"/>
    </location>
</feature>
<feature type="strand" evidence="25">
    <location>
        <begin position="555"/>
        <end position="568"/>
    </location>
</feature>
<feature type="strand" evidence="25">
    <location>
        <begin position="570"/>
        <end position="572"/>
    </location>
</feature>
<feature type="strand" evidence="25">
    <location>
        <begin position="576"/>
        <end position="578"/>
    </location>
</feature>
<feature type="strand" evidence="25">
    <location>
        <begin position="580"/>
        <end position="586"/>
    </location>
</feature>
<feature type="strand" evidence="29">
    <location>
        <begin position="590"/>
        <end position="592"/>
    </location>
</feature>
<feature type="helix" evidence="25">
    <location>
        <begin position="598"/>
        <end position="605"/>
    </location>
</feature>
<feature type="strand" evidence="25">
    <location>
        <begin position="609"/>
        <end position="611"/>
    </location>
</feature>
<feature type="helix" evidence="25">
    <location>
        <begin position="615"/>
        <end position="629"/>
    </location>
</feature>
<feature type="strand" evidence="25">
    <location>
        <begin position="632"/>
        <end position="638"/>
    </location>
</feature>
<feature type="turn" evidence="25">
    <location>
        <begin position="639"/>
        <end position="642"/>
    </location>
</feature>
<feature type="helix" evidence="25">
    <location>
        <begin position="643"/>
        <end position="653"/>
    </location>
</feature>
<feature type="helix" evidence="25">
    <location>
        <begin position="659"/>
        <end position="662"/>
    </location>
</feature>
<feature type="strand" evidence="25">
    <location>
        <begin position="663"/>
        <end position="665"/>
    </location>
</feature>
<feature type="helix" evidence="25">
    <location>
        <begin position="679"/>
        <end position="684"/>
    </location>
</feature>
<feature type="turn" evidence="25">
    <location>
        <begin position="685"/>
        <end position="687"/>
    </location>
</feature>
<feature type="strand" evidence="25">
    <location>
        <begin position="688"/>
        <end position="692"/>
    </location>
</feature>
<feature type="helix" evidence="25">
    <location>
        <begin position="693"/>
        <end position="700"/>
    </location>
</feature>
<feature type="helix" evidence="25">
    <location>
        <begin position="708"/>
        <end position="716"/>
    </location>
</feature>
<feature type="helix" evidence="25">
    <location>
        <begin position="725"/>
        <end position="732"/>
    </location>
</feature>
<feature type="helix" evidence="25">
    <location>
        <begin position="735"/>
        <end position="758"/>
    </location>
</feature>
<feature type="helix" evidence="25">
    <location>
        <begin position="761"/>
        <end position="772"/>
    </location>
</feature>
<feature type="helix" evidence="25">
    <location>
        <begin position="776"/>
        <end position="779"/>
    </location>
</feature>
<feature type="turn" evidence="28">
    <location>
        <begin position="780"/>
        <end position="782"/>
    </location>
</feature>
<feature type="helix" evidence="25">
    <location>
        <begin position="785"/>
        <end position="798"/>
    </location>
</feature>
<feature type="strand" evidence="25">
    <location>
        <begin position="850"/>
        <end position="852"/>
    </location>
</feature>
<feature type="strand" evidence="25">
    <location>
        <begin position="856"/>
        <end position="861"/>
    </location>
</feature>
<feature type="helix" evidence="25">
    <location>
        <begin position="864"/>
        <end position="871"/>
    </location>
</feature>
<feature type="turn" evidence="25">
    <location>
        <begin position="876"/>
        <end position="878"/>
    </location>
</feature>
<feature type="strand" evidence="28">
    <location>
        <begin position="885"/>
        <end position="889"/>
    </location>
</feature>
<feature type="strand" evidence="28">
    <location>
        <begin position="891"/>
        <end position="894"/>
    </location>
</feature>
<feature type="helix" evidence="25">
    <location>
        <begin position="910"/>
        <end position="930"/>
    </location>
</feature>
<feature type="strand" evidence="25">
    <location>
        <begin position="931"/>
        <end position="933"/>
    </location>
</feature>
<feature type="helix" evidence="25">
    <location>
        <begin position="936"/>
        <end position="960"/>
    </location>
</feature>
<feature type="strand" evidence="32">
    <location>
        <begin position="965"/>
        <end position="967"/>
    </location>
</feature>
<feature type="helix" evidence="25">
    <location>
        <begin position="970"/>
        <end position="993"/>
    </location>
</feature>
<feature type="strand" evidence="25">
    <location>
        <begin position="997"/>
        <end position="1000"/>
    </location>
</feature>
<feature type="strand" evidence="25">
    <location>
        <begin position="1002"/>
        <end position="1009"/>
    </location>
</feature>
<feature type="helix" evidence="25">
    <location>
        <begin position="1015"/>
        <end position="1030"/>
    </location>
</feature>
<feature type="strand" evidence="32">
    <location>
        <begin position="1033"/>
        <end position="1035"/>
    </location>
</feature>
<feature type="strand" evidence="25">
    <location>
        <begin position="1038"/>
        <end position="1051"/>
    </location>
</feature>
<feature type="strand" evidence="25">
    <location>
        <begin position="1054"/>
        <end position="1062"/>
    </location>
</feature>
<feature type="helix" evidence="30">
    <location>
        <begin position="1064"/>
        <end position="1066"/>
    </location>
</feature>
<feature type="strand" evidence="25">
    <location>
        <begin position="1068"/>
        <end position="1076"/>
    </location>
</feature>
<feature type="helix" evidence="25">
    <location>
        <begin position="1078"/>
        <end position="1080"/>
    </location>
</feature>
<feature type="strand" evidence="25">
    <location>
        <begin position="1082"/>
        <end position="1084"/>
    </location>
</feature>
<feature type="helix" evidence="25">
    <location>
        <begin position="1086"/>
        <end position="1099"/>
    </location>
</feature>
<feature type="strand" evidence="25">
    <location>
        <begin position="1101"/>
        <end position="1103"/>
    </location>
</feature>
<feature type="helix" evidence="25">
    <location>
        <begin position="1105"/>
        <end position="1125"/>
    </location>
</feature>
<feature type="helix" evidence="25">
    <location>
        <begin position="1130"/>
        <end position="1133"/>
    </location>
</feature>
<feature type="strand" evidence="25">
    <location>
        <begin position="1135"/>
        <end position="1138"/>
    </location>
</feature>
<feature type="helix" evidence="25">
    <location>
        <begin position="1143"/>
        <end position="1145"/>
    </location>
</feature>
<feature type="helix" evidence="25">
    <location>
        <begin position="1149"/>
        <end position="1151"/>
    </location>
</feature>
<feature type="helix" evidence="25">
    <location>
        <begin position="1153"/>
        <end position="1164"/>
    </location>
</feature>
<feature type="strand" evidence="25">
    <location>
        <begin position="1165"/>
        <end position="1167"/>
    </location>
</feature>
<feature type="strand" evidence="25">
    <location>
        <begin position="1174"/>
        <end position="1181"/>
    </location>
</feature>
<feature type="helix" evidence="25">
    <location>
        <begin position="1188"/>
        <end position="1190"/>
    </location>
</feature>
<feature type="helix" evidence="25">
    <location>
        <begin position="1195"/>
        <end position="1200"/>
    </location>
</feature>
<feature type="helix" evidence="25">
    <location>
        <begin position="1208"/>
        <end position="1214"/>
    </location>
</feature>
<feature type="helix" evidence="25">
    <location>
        <begin position="1216"/>
        <end position="1224"/>
    </location>
</feature>
<feature type="strand" evidence="31">
    <location>
        <begin position="1225"/>
        <end position="1227"/>
    </location>
</feature>
<feature type="helix" evidence="25">
    <location>
        <begin position="1232"/>
        <end position="1238"/>
    </location>
</feature>
<feature type="helix" evidence="27">
    <location>
        <begin position="1243"/>
        <end position="1245"/>
    </location>
</feature>
<feature type="helix" evidence="32">
    <location>
        <begin position="1253"/>
        <end position="1255"/>
    </location>
</feature>
<feature type="helix" evidence="26">
    <location>
        <begin position="1269"/>
        <end position="1272"/>
    </location>
</feature>
<feature type="turn" evidence="26">
    <location>
        <begin position="1273"/>
        <end position="1275"/>
    </location>
</feature>
<feature type="strand" evidence="26">
    <location>
        <begin position="1279"/>
        <end position="1282"/>
    </location>
</feature>
<feature type="turn" evidence="26">
    <location>
        <begin position="1284"/>
        <end position="1286"/>
    </location>
</feature>
<feature type="strand" evidence="26">
    <location>
        <begin position="1289"/>
        <end position="1298"/>
    </location>
</feature>
<feature type="helix" evidence="31">
    <location>
        <begin position="1300"/>
        <end position="1302"/>
    </location>
</feature>
<feature type="turn" evidence="32">
    <location>
        <begin position="1306"/>
        <end position="1308"/>
    </location>
</feature>
<feature type="strand" evidence="31">
    <location>
        <begin position="1311"/>
        <end position="1314"/>
    </location>
</feature>
<feature type="helix" evidence="26">
    <location>
        <begin position="1319"/>
        <end position="1322"/>
    </location>
</feature>
<feature type="helix" evidence="26">
    <location>
        <begin position="1323"/>
        <end position="1342"/>
    </location>
</feature>
<feature type="strand" evidence="26">
    <location>
        <begin position="1346"/>
        <end position="1349"/>
    </location>
</feature>
<feature type="turn" evidence="26">
    <location>
        <begin position="1351"/>
        <end position="1353"/>
    </location>
</feature>
<feature type="strand" evidence="26">
    <location>
        <begin position="1356"/>
        <end position="1358"/>
    </location>
</feature>
<feature type="strand" evidence="23">
    <location>
        <begin position="1359"/>
        <end position="1362"/>
    </location>
</feature>
<feature type="strand" evidence="24">
    <location>
        <begin position="1364"/>
        <end position="1367"/>
    </location>
</feature>
<feature type="strand" evidence="26">
    <location>
        <begin position="1368"/>
        <end position="1370"/>
    </location>
</feature>
<feature type="strand" evidence="26">
    <location>
        <begin position="1372"/>
        <end position="1383"/>
    </location>
</feature>
<feature type="helix" evidence="26">
    <location>
        <begin position="1385"/>
        <end position="1397"/>
    </location>
</feature>
<feature type="helix" evidence="26">
    <location>
        <begin position="1401"/>
        <end position="1406"/>
    </location>
</feature>
<feature type="strand" evidence="32">
    <location>
        <begin position="1408"/>
        <end position="1410"/>
    </location>
</feature>
<feature type="helix" evidence="26">
    <location>
        <begin position="1411"/>
        <end position="1420"/>
    </location>
</feature>
<feature type="helix" evidence="26">
    <location>
        <begin position="1424"/>
        <end position="1434"/>
    </location>
</feature>
<feature type="strand" evidence="31">
    <location>
        <begin position="1442"/>
        <end position="1444"/>
    </location>
</feature>
<feature type="helix" evidence="28">
    <location>
        <begin position="1445"/>
        <end position="1447"/>
    </location>
</feature>
<feature type="strand" evidence="31">
    <location>
        <begin position="1448"/>
        <end position="1450"/>
    </location>
</feature>
<feature type="helix" evidence="31">
    <location>
        <begin position="1451"/>
        <end position="1455"/>
    </location>
</feature>
<keyword id="KW-0002">3D-structure</keyword>
<keyword id="KW-0007">Acetylation</keyword>
<keyword id="KW-0963">Cytoplasm</keyword>
<keyword id="KW-0903">Direct protein sequencing</keyword>
<keyword id="KW-0225">Disease variant</keyword>
<keyword id="KW-0235">DNA replication</keyword>
<keyword id="KW-0238">DNA-binding</keyword>
<keyword id="KW-0239">DNA-directed DNA polymerase</keyword>
<keyword id="KW-0242">Dwarfism</keyword>
<keyword id="KW-0945">Host-virus interaction</keyword>
<keyword id="KW-0991">Intellectual disability</keyword>
<keyword id="KW-0479">Metal-binding</keyword>
<keyword id="KW-0548">Nucleotidyltransferase</keyword>
<keyword id="KW-0539">Nucleus</keyword>
<keyword id="KW-0597">Phosphoprotein</keyword>
<keyword id="KW-1267">Proteomics identification</keyword>
<keyword id="KW-1185">Reference proteome</keyword>
<keyword id="KW-0808">Transferase</keyword>
<keyword id="KW-0862">Zinc</keyword>
<keyword id="KW-0863">Zinc-finger</keyword>
<gene>
    <name type="primary">POLA1</name>
    <name type="synonym">POLA</name>
</gene>
<sequence length="1462" mass="165913">MAPVHGDDSLSDSGSFVSSRARREKKSKKGRQEALERLKKAKAGEKYKYEVEDFTGVYEEVDEEQYSKLVQARQDDDWIVDDDGIGYVEDGREIFDDDLEDDALDADEKGKDGKARNKDKRNVKKLAVTKPNNIKSMFIACAGKKTADKAVDLSKDGLLGDILQDLNTETPQITPPPVMILKKKRSIGASPNPFSVHTATAVPSGKIASPVSRKEPPLTPVPLKRAEFAGDDVQVESTEEEQESGAMEFEDGDFDEPMEVEEVDLEPMAAKAWDKESEPAEEVKQEADSGKGTVSYLGSFLPDVSCWDIDQEGDSSFSVQEVQVDSSHLPLVKGADEEQVFHFYWLDAYEDQYNQPGVVFLFGKVWIESAETHVSCCVMVKNIERTLYFLPREMKIDLNTGKETGTPISMKDVYEEFDEKIATKYKIMKFKSKPVEKNYAFEIPDVPEKSEYLEVKYSAEMPQLPQDLKGETFSHVFGTNTSSLELFLMNRKIKGPCWLEVKSPQLLNQPVSWCKVEAMALKPDLVNVIKDVSPPPLVVMAFSMKTMQNAKNHQNEIIAMAALVHHSFALDKAAPKPPFQSHFCVVSKPKDCIFPYAFKEVIEKKNVKVEVAATERTLLGFFLAKVHKIDPDIIVGHNIYGFELEVLLQRINVCKAPHWSKIGRLKRSNMPKLGGRSGFGERNATCGRMICDVEISAKELIRCKSYHLSELVQQILKTERVVIPMENIQNMYSESSQLLYLLEHTWKDAKFILQIMCELNVLPLALQITNIAGNIMSRTLMGGRSERNEFLLLHAFYENNYIVPDKQIFRKPQQKLGDEDEEIDGDTNKYKKGRKKAAYAGGLVLDPKVGFYDKFILLLDFNSLYPSIIQEFNICFTTVQRVASEAQKVTEDGEQEQIPELPDPSLEMGILPREIRKLVERRKQVKQLMKQQDLNPDLILQYDIRQKALKLTANSMYGCLGFSYSRFYAKPLAALVTYKGREILMHTKEMVQKMNLEVIYGDTDSIMINTNSTNLEEVFKLGNKVKSEVNKLYKLLEIDIDGVFKSLLLLKKKKYAALVVEPTSDGNYVTKQELKGLDIVRRDWCDLAKDTGNFVIGQILSDQSRDTIVENIQKRLIEIGENVLNGSVPVSQFEINKALTKDPQDYPDKKSLPHVHVALWINSQGGRKVKAGDTVSYVICQDGSNLTASQRAYAPEQLQKQDNLTIDTQYYLAQQIHPVVARICEPIDGIDAVLIATWLGLDPTQFRVHHYHKDEENDALLGGPAQLTDEEKYRDCERFKCPCPTCGTENIYDNVFDGSGTDMEPSLYRCSNIDCKASPLTFTVQLSNKLIMDIRRFIKKYYDGWLICEEPTCRNRTRHLPLQFSRTGPLCPACMKATLQPEYSDKSLYTQLCFYRYIFDAECALEKLTTDHEKDKLKKQFFTPKVLQDYRKLKNTAEQFLSRSGYSEVNLSKLFAGCAVKS</sequence>
<name>DPOLA_HUMAN</name>
<organism>
    <name type="scientific">Homo sapiens</name>
    <name type="common">Human</name>
    <dbReference type="NCBI Taxonomy" id="9606"/>
    <lineage>
        <taxon>Eukaryota</taxon>
        <taxon>Metazoa</taxon>
        <taxon>Chordata</taxon>
        <taxon>Craniata</taxon>
        <taxon>Vertebrata</taxon>
        <taxon>Euteleostomi</taxon>
        <taxon>Mammalia</taxon>
        <taxon>Eutheria</taxon>
        <taxon>Euarchontoglires</taxon>
        <taxon>Primates</taxon>
        <taxon>Haplorrhini</taxon>
        <taxon>Catarrhini</taxon>
        <taxon>Hominidae</taxon>
        <taxon>Homo</taxon>
    </lineage>
</organism>
<accession>P09884</accession>
<accession>Q86UQ7</accession>
<reference key="1">
    <citation type="journal article" date="1988" name="EMBO J.">
        <title>Human DNA polymerase alpha gene expression is cell proliferation dependent and its primary structure is similar to both prokaryotic and eukaryotic replicative DNA polymerases.</title>
        <authorList>
            <person name="Wong S.W."/>
            <person name="Wahl A.F."/>
            <person name="Yuan P.-M."/>
            <person name="Arai N."/>
            <person name="Pearson B.E."/>
            <person name="Arai K."/>
            <person name="Korn D."/>
            <person name="Hunkapiller M.W."/>
            <person name="Wang T.S.-F."/>
        </authorList>
    </citation>
    <scope>NUCLEOTIDE SEQUENCE [MRNA]</scope>
</reference>
<reference key="2">
    <citation type="submission" date="2003-04" db="EMBL/GenBank/DDBJ databases">
        <authorList>
            <consortium name="NIEHS SNPs program"/>
        </authorList>
    </citation>
    <scope>NUCLEOTIDE SEQUENCE [GENOMIC DNA]</scope>
</reference>
<reference key="3">
    <citation type="journal article" date="1991" name="Mol. Cell. Biol.">
        <title>Human DNA polymerase alpha gene: sequences controlling expression in cycling and serum-stimulated cells.</title>
        <authorList>
            <person name="Pearson B.E."/>
            <person name="Nasheuer H.-P."/>
            <person name="Wang T.S.-F."/>
        </authorList>
    </citation>
    <scope>NUCLEOTIDE SEQUENCE [GENOMIC DNA] OF 1-8</scope>
</reference>
<reference key="4">
    <citation type="journal article" date="1990" name="Nucleic Acids Res.">
        <title>Human DNA polymerase alpha catalytic polypeptide binds ConA and RCA and contains a specific labile site in the N-terminus.</title>
        <authorList>
            <person name="Hsi K.-L."/>
            <person name="Copeland W.C."/>
            <person name="Wang T.S.-F."/>
        </authorList>
    </citation>
    <scope>PROTEIN SEQUENCE OF 19-37 AND 1405-1426</scope>
    <scope>PROTEOLYTIC PROCESSING AT LYS-124</scope>
</reference>
<reference key="5">
    <citation type="journal article" date="1977" name="J. Biol. Chem.">
        <title>DNA polymerase-alpha. Purification and structural characterization of the near homogeneous enzyme from human KB cells.</title>
        <authorList>
            <person name="Fisher P.A."/>
            <person name="Korn D."/>
        </authorList>
    </citation>
    <scope>CATALYTIC ACTIVITY</scope>
</reference>
<reference key="6">
    <citation type="journal article" date="1986" name="Mol. Cell. Biol.">
        <title>T-antigen-DNA polymerase alpha complex implicated in simian virus 40 DNA replication.</title>
        <authorList>
            <person name="Smale S.T."/>
            <person name="Tjian R."/>
        </authorList>
    </citation>
    <scope>INTERACTION WITH SV40 LARGE T ANTIGEN (MICROBIAL INFECTION)</scope>
</reference>
<reference key="7">
    <citation type="journal article" date="1995" name="Proc. Natl. Acad. Sci. U.S.A.">
        <title>Interaction of herpes simplex virus 1 origin-binding protein with DNA polymerase alpha.</title>
        <authorList>
            <person name="Lee S.S."/>
            <person name="Dong Q."/>
            <person name="Wang T.S."/>
            <person name="Lehman I.R."/>
        </authorList>
    </citation>
    <scope>INTERACTION WITH HHV-1 UL9 PROTEIN (MICROBIAL INFECTION)</scope>
</reference>
<reference key="8">
    <citation type="journal article" date="1997" name="Biochemistry">
        <title>Role of protein-protein interactions in the function of replication protein A (RPA): RPA modulates the activity of DNA polymerase alpha by multiple mechanisms.</title>
        <authorList>
            <person name="Braun K.A."/>
            <person name="Lao Y."/>
            <person name="He Z."/>
            <person name="Ingles C.J."/>
            <person name="Wold M.S."/>
        </authorList>
    </citation>
    <scope>INTERACTION WITH RPA1</scope>
</reference>
<reference key="9">
    <citation type="journal article" date="1998" name="J. Biol. Chem.">
        <title>Primase activity of human DNA polymerase alpha-primase. Divalent cations stabilize the enzyme activity of the p48 subunit.</title>
        <authorList>
            <person name="Schneider A."/>
            <person name="Smith R.W."/>
            <person name="Kautz A.R."/>
            <person name="Weisshart K."/>
            <person name="Grosse F."/>
            <person name="Nasheuer H.P."/>
        </authorList>
    </citation>
    <scope>IDENTIFICATION IN THE DNA POLYMERASE ALPHA COMPLEX</scope>
</reference>
<reference key="10">
    <citation type="journal article" date="1998" name="Nucleic Acids Res.">
        <title>Functional association of poly(ADP-ribose) polymerase with DNA polymerase alpha-primase complex: a link between DNA strand break detection and DNA replication.</title>
        <authorList>
            <person name="Dantzer F."/>
            <person name="Nasheuer H.P."/>
            <person name="Vonesch J.L."/>
            <person name="de Murcia G."/>
            <person name="Menissier-de Murcia J."/>
        </authorList>
    </citation>
    <scope>FUNCTION</scope>
    <scope>CATALYTIC ACTIVITY</scope>
    <scope>INTERACTION WITH PARP1</scope>
</reference>
<reference key="11">
    <citation type="journal article" date="2008" name="Proc. Natl. Acad. Sci. U.S.A.">
        <title>A quantitative atlas of mitotic phosphorylation.</title>
        <authorList>
            <person name="Dephoure N."/>
            <person name="Zhou C."/>
            <person name="Villen J."/>
            <person name="Beausoleil S.A."/>
            <person name="Bakalarski C.E."/>
            <person name="Elledge S.J."/>
            <person name="Gygi S.P."/>
        </authorList>
    </citation>
    <scope>PHOSPHORYLATION [LARGE SCALE ANALYSIS] AT SER-186; SER-190 AND SER-209</scope>
    <scope>IDENTIFICATION BY MASS SPECTROMETRY [LARGE SCALE ANALYSIS]</scope>
    <source>
        <tissue>Cervix carcinoma</tissue>
    </source>
</reference>
<reference key="12">
    <citation type="journal article" date="2009" name="J. Biol. Chem.">
        <title>Physical interactions between Mcm10, DNA, and DNA polymerase alpha.</title>
        <authorList>
            <person name="Warren E.M."/>
            <person name="Huang H."/>
            <person name="Fanning E."/>
            <person name="Chazin W.J."/>
            <person name="Eichman B.F."/>
        </authorList>
    </citation>
    <scope>INTERACTION WITH MCM10</scope>
</reference>
<reference key="13">
    <citation type="journal article" date="2009" name="Sci. Signal.">
        <title>Quantitative phosphoproteomic analysis of T cell receptor signaling reveals system-wide modulation of protein-protein interactions.</title>
        <authorList>
            <person name="Mayya V."/>
            <person name="Lundgren D.H."/>
            <person name="Hwang S.-I."/>
            <person name="Rezaul K."/>
            <person name="Wu L."/>
            <person name="Eng J.K."/>
            <person name="Rodionov V."/>
            <person name="Han D.K."/>
        </authorList>
    </citation>
    <scope>PHOSPHORYLATION [LARGE SCALE ANALYSIS] AT THR-174 AND SER-186</scope>
    <scope>IDENTIFICATION BY MASS SPECTROMETRY [LARGE SCALE ANALYSIS]</scope>
    <source>
        <tissue>Leukemic T-cell</tissue>
    </source>
</reference>
<reference key="14">
    <citation type="journal article" date="2010" name="Sci. Signal.">
        <title>Quantitative phosphoproteomics reveals widespread full phosphorylation site occupancy during mitosis.</title>
        <authorList>
            <person name="Olsen J.V."/>
            <person name="Vermeulen M."/>
            <person name="Santamaria A."/>
            <person name="Kumar C."/>
            <person name="Miller M.L."/>
            <person name="Jensen L.J."/>
            <person name="Gnad F."/>
            <person name="Cox J."/>
            <person name="Jensen T.S."/>
            <person name="Nigg E.A."/>
            <person name="Brunak S."/>
            <person name="Mann M."/>
        </authorList>
    </citation>
    <scope>PHOSPHORYLATION [LARGE SCALE ANALYSIS] AT THR-174; SER-186; SER-190 AND SER-209</scope>
    <scope>IDENTIFICATION BY MASS SPECTROMETRY [LARGE SCALE ANALYSIS]</scope>
    <source>
        <tissue>Cervix carcinoma</tissue>
    </source>
</reference>
<reference key="15">
    <citation type="journal article" date="2011" name="BMC Syst. Biol.">
        <title>Initial characterization of the human central proteome.</title>
        <authorList>
            <person name="Burkard T.R."/>
            <person name="Planyavsky M."/>
            <person name="Kaupe I."/>
            <person name="Breitwieser F.P."/>
            <person name="Buerckstuemmer T."/>
            <person name="Bennett K.L."/>
            <person name="Superti-Furga G."/>
            <person name="Colinge J."/>
        </authorList>
    </citation>
    <scope>IDENTIFICATION BY MASS SPECTROMETRY [LARGE SCALE ANALYSIS]</scope>
</reference>
<reference key="16">
    <citation type="journal article" date="2011" name="Sci. Signal.">
        <title>System-wide temporal characterization of the proteome and phosphoproteome of human embryonic stem cell differentiation.</title>
        <authorList>
            <person name="Rigbolt K.T."/>
            <person name="Prokhorova T.A."/>
            <person name="Akimov V."/>
            <person name="Henningsen J."/>
            <person name="Johansen P.T."/>
            <person name="Kratchmarova I."/>
            <person name="Kassem M."/>
            <person name="Mann M."/>
            <person name="Olsen J.V."/>
            <person name="Blagoev B."/>
        </authorList>
    </citation>
    <scope>PHOSPHORYLATION [LARGE SCALE ANALYSIS] AT SER-186 AND SER-209</scope>
    <scope>IDENTIFICATION BY MASS SPECTROMETRY [LARGE SCALE ANALYSIS]</scope>
</reference>
<reference key="17">
    <citation type="journal article" date="2013" name="J. Proteome Res.">
        <title>Toward a comprehensive characterization of a human cancer cell phosphoproteome.</title>
        <authorList>
            <person name="Zhou H."/>
            <person name="Di Palma S."/>
            <person name="Preisinger C."/>
            <person name="Peng M."/>
            <person name="Polat A.N."/>
            <person name="Heck A.J."/>
            <person name="Mohammed S."/>
        </authorList>
    </citation>
    <scope>PHOSPHORYLATION [LARGE SCALE ANALYSIS] AT SER-186; SER-190; SER-209 AND THR-406</scope>
    <scope>IDENTIFICATION BY MASS SPECTROMETRY [LARGE SCALE ANALYSIS]</scope>
    <source>
        <tissue>Cervix carcinoma</tissue>
        <tissue>Erythroleukemia</tissue>
    </source>
</reference>
<reference key="18">
    <citation type="journal article" date="2016" name="Nat. Immunol.">
        <title>DNA polymerase-alpha regulates the activation of type I interferons through cytosolic RNA:DNA synthesis.</title>
        <authorList>
            <person name="Starokadomskyy P."/>
            <person name="Gemelli T."/>
            <person name="Rios J.J."/>
            <person name="Xing C."/>
            <person name="Wang R.C."/>
            <person name="Li H."/>
            <person name="Pokatayev V."/>
            <person name="Dozmorov I."/>
            <person name="Khan S."/>
            <person name="Miyata N."/>
            <person name="Fraile G."/>
            <person name="Raj P."/>
            <person name="Xu Z."/>
            <person name="Xu Z."/>
            <person name="Ma L."/>
            <person name="Lin Z."/>
            <person name="Wang H."/>
            <person name="Yang Y."/>
            <person name="Ben-Amitai D."/>
            <person name="Orenstein N."/>
            <person name="Mussaffi H."/>
            <person name="Baselga E."/>
            <person name="Tadini G."/>
            <person name="Grunebaum E."/>
            <person name="Sarajlija A."/>
            <person name="Krzewski K."/>
            <person name="Wakeland E.K."/>
            <person name="Yan N."/>
            <person name="de la Morena M.T."/>
            <person name="Zinn A.R."/>
            <person name="Burstein E."/>
        </authorList>
    </citation>
    <scope>INVOLVEMENT IN PDR</scope>
    <scope>FUNCTION</scope>
    <scope>SUBCELLULAR LOCATION</scope>
</reference>
<reference key="19">
    <citation type="journal article" date="2003" name="Biochim. Biophys. Acta">
        <title>Nuclear magnetic resonance structures of the zinc finger domain of human DNA polymerase-alpha.</title>
        <authorList>
            <person name="Evanics F."/>
            <person name="Maurmann L."/>
            <person name="Yang W.W."/>
            <person name="Bose R.N."/>
        </authorList>
    </citation>
    <scope>STRUCTURE BY NMR OF 1345-1382</scope>
</reference>
<reference evidence="17" key="20">
    <citation type="journal article" date="2016" name="J. Biol. Chem.">
        <title>Mechanism of Concerted RNA-DNA Primer Synthesis by the Human Primosome.</title>
        <authorList>
            <person name="Baranovskiy A.G."/>
            <person name="Babayeva N.D."/>
            <person name="Zhang Y."/>
            <person name="Gu J."/>
            <person name="Suwa Y."/>
            <person name="Pavlov Y.I."/>
            <person name="Tahirov T.H."/>
        </authorList>
    </citation>
    <scope>X-RAY CRYSTALLOGRAPHY (3.60 ANGSTROMS) OF 335-1462 IN COMPLEX WITH ZINC</scope>
    <scope>FUNCTION</scope>
    <scope>CATALYTIC ACTIVITY</scope>
    <scope>ACTIVITY REGULATION</scope>
    <scope>SUBUNIT</scope>
</reference>
<reference key="21">
    <citation type="journal article" date="2019" name="Am. J. Hum. Genet.">
        <title>Defective DNA Polymerase alpha-Primase Leads to X-Linked Intellectual Disability Associated with Severe Growth Retardation, Microcephaly, and Hypogonadism.</title>
        <authorList>
            <person name="Van Esch H."/>
            <person name="Colnaghi R."/>
            <person name="Freson K."/>
            <person name="Starokadomskyy P."/>
            <person name="Zankl A."/>
            <person name="Backx L."/>
            <person name="Abramowicz I."/>
            <person name="Outwin E."/>
            <person name="Rohena L."/>
            <person name="Faulkner C."/>
            <person name="Leong G.M."/>
            <person name="Newbury-Ecob R.A."/>
            <person name="Challis R.C."/>
            <person name="Ounap K."/>
            <person name="Jaeken J."/>
            <person name="Seuntjens E."/>
            <person name="Devriendt K."/>
            <person name="Burstein E."/>
            <person name="Low K.J."/>
            <person name="O'Driscoll M."/>
        </authorList>
    </citation>
    <scope>INVOLVEMENT IN VEODS</scope>
    <scope>VARIANTS VEODS SER-79; ARG-110 AND LEU-1381</scope>
    <scope>CHARACTERIZATION OF VARIANTS VEODS SER-79 AND LEU-1381</scope>
    <scope>FUNCTION</scope>
</reference>
<evidence type="ECO:0000250" key="1">
    <source>
        <dbReference type="UniProtKB" id="P15436"/>
    </source>
</evidence>
<evidence type="ECO:0000250" key="2">
    <source>
        <dbReference type="UniProtKB" id="P33609"/>
    </source>
</evidence>
<evidence type="ECO:0000255" key="3"/>
<evidence type="ECO:0000256" key="4">
    <source>
        <dbReference type="SAM" id="MobiDB-lite"/>
    </source>
</evidence>
<evidence type="ECO:0000269" key="5">
    <source>
    </source>
</evidence>
<evidence type="ECO:0000269" key="6">
    <source>
    </source>
</evidence>
<evidence type="ECO:0000269" key="7">
    <source>
    </source>
</evidence>
<evidence type="ECO:0000269" key="8">
    <source>
    </source>
</evidence>
<evidence type="ECO:0000269" key="9">
    <source>
    </source>
</evidence>
<evidence type="ECO:0000269" key="10">
    <source>
    </source>
</evidence>
<evidence type="ECO:0000269" key="11">
    <source>
    </source>
</evidence>
<evidence type="ECO:0000269" key="12">
    <source>
    </source>
</evidence>
<evidence type="ECO:0000269" key="13">
    <source>
    </source>
</evidence>
<evidence type="ECO:0000269" key="14">
    <source>
    </source>
</evidence>
<evidence type="ECO:0000269" key="15">
    <source>
    </source>
</evidence>
<evidence type="ECO:0000305" key="16"/>
<evidence type="ECO:0007744" key="17">
    <source>
        <dbReference type="PDB" id="5EXR"/>
    </source>
</evidence>
<evidence type="ECO:0007744" key="18">
    <source>
    </source>
</evidence>
<evidence type="ECO:0007744" key="19">
    <source>
    </source>
</evidence>
<evidence type="ECO:0007744" key="20">
    <source>
    </source>
</evidence>
<evidence type="ECO:0007744" key="21">
    <source>
    </source>
</evidence>
<evidence type="ECO:0007744" key="22">
    <source>
    </source>
</evidence>
<evidence type="ECO:0007829" key="23">
    <source>
        <dbReference type="PDB" id="1K18"/>
    </source>
</evidence>
<evidence type="ECO:0007829" key="24">
    <source>
        <dbReference type="PDB" id="1N5G"/>
    </source>
</evidence>
<evidence type="ECO:0007829" key="25">
    <source>
        <dbReference type="PDB" id="4QCL"/>
    </source>
</evidence>
<evidence type="ECO:0007829" key="26">
    <source>
        <dbReference type="PDB" id="4Y97"/>
    </source>
</evidence>
<evidence type="ECO:0007829" key="27">
    <source>
        <dbReference type="PDB" id="6AS7"/>
    </source>
</evidence>
<evidence type="ECO:0007829" key="28">
    <source>
        <dbReference type="PDB" id="8D0B"/>
    </source>
</evidence>
<evidence type="ECO:0007829" key="29">
    <source>
        <dbReference type="PDB" id="8D96"/>
    </source>
</evidence>
<evidence type="ECO:0007829" key="30">
    <source>
        <dbReference type="PDB" id="8QJ7"/>
    </source>
</evidence>
<evidence type="ECO:0007829" key="31">
    <source>
        <dbReference type="PDB" id="8VY3"/>
    </source>
</evidence>
<evidence type="ECO:0007829" key="32">
    <source>
        <dbReference type="PDB" id="9C8V"/>
    </source>
</evidence>
<proteinExistence type="evidence at protein level"/>